<accession>A9BB12</accession>
<gene>
    <name evidence="1" type="primary">bioB</name>
    <name type="ordered locus">P9211_10931</name>
</gene>
<comment type="function">
    <text evidence="1">Catalyzes the conversion of dethiobiotin (DTB) to biotin by the insertion of a sulfur atom into dethiobiotin via a radical-based mechanism.</text>
</comment>
<comment type="catalytic activity">
    <reaction evidence="1">
        <text>(4R,5S)-dethiobiotin + (sulfur carrier)-SH + 2 reduced [2Fe-2S]-[ferredoxin] + 2 S-adenosyl-L-methionine = (sulfur carrier)-H + biotin + 2 5'-deoxyadenosine + 2 L-methionine + 2 oxidized [2Fe-2S]-[ferredoxin]</text>
        <dbReference type="Rhea" id="RHEA:22060"/>
        <dbReference type="Rhea" id="RHEA-COMP:10000"/>
        <dbReference type="Rhea" id="RHEA-COMP:10001"/>
        <dbReference type="Rhea" id="RHEA-COMP:14737"/>
        <dbReference type="Rhea" id="RHEA-COMP:14739"/>
        <dbReference type="ChEBI" id="CHEBI:17319"/>
        <dbReference type="ChEBI" id="CHEBI:29917"/>
        <dbReference type="ChEBI" id="CHEBI:33737"/>
        <dbReference type="ChEBI" id="CHEBI:33738"/>
        <dbReference type="ChEBI" id="CHEBI:57586"/>
        <dbReference type="ChEBI" id="CHEBI:57844"/>
        <dbReference type="ChEBI" id="CHEBI:59789"/>
        <dbReference type="ChEBI" id="CHEBI:64428"/>
        <dbReference type="ChEBI" id="CHEBI:149473"/>
        <dbReference type="EC" id="2.8.1.6"/>
    </reaction>
</comment>
<comment type="cofactor">
    <cofactor evidence="1">
        <name>[4Fe-4S] cluster</name>
        <dbReference type="ChEBI" id="CHEBI:49883"/>
    </cofactor>
    <text evidence="1">Binds 1 [4Fe-4S] cluster. The cluster is coordinated with 3 cysteines and an exchangeable S-adenosyl-L-methionine.</text>
</comment>
<comment type="cofactor">
    <cofactor evidence="1">
        <name>[2Fe-2S] cluster</name>
        <dbReference type="ChEBI" id="CHEBI:190135"/>
    </cofactor>
    <text evidence="1">Binds 1 [2Fe-2S] cluster. The cluster is coordinated with 3 cysteines and 1 arginine.</text>
</comment>
<comment type="pathway">
    <text evidence="1">Cofactor biosynthesis; biotin biosynthesis; biotin from 7,8-diaminononanoate: step 2/2.</text>
</comment>
<comment type="subunit">
    <text evidence="1">Homodimer.</text>
</comment>
<comment type="similarity">
    <text evidence="1">Belongs to the radical SAM superfamily. Biotin synthase family.</text>
</comment>
<evidence type="ECO:0000255" key="1">
    <source>
        <dbReference type="HAMAP-Rule" id="MF_01694"/>
    </source>
</evidence>
<evidence type="ECO:0000255" key="2">
    <source>
        <dbReference type="PROSITE-ProRule" id="PRU01266"/>
    </source>
</evidence>
<dbReference type="EC" id="2.8.1.6" evidence="1"/>
<dbReference type="EMBL" id="CP000878">
    <property type="protein sequence ID" value="ABX09024.1"/>
    <property type="molecule type" value="Genomic_DNA"/>
</dbReference>
<dbReference type="RefSeq" id="WP_012195645.1">
    <property type="nucleotide sequence ID" value="NC_009976.1"/>
</dbReference>
<dbReference type="SMR" id="A9BB12"/>
<dbReference type="STRING" id="93059.P9211_10931"/>
<dbReference type="KEGG" id="pmj:P9211_10931"/>
<dbReference type="eggNOG" id="COG0502">
    <property type="taxonomic scope" value="Bacteria"/>
</dbReference>
<dbReference type="HOGENOM" id="CLU_033172_1_2_3"/>
<dbReference type="OrthoDB" id="9786826at2"/>
<dbReference type="UniPathway" id="UPA00078">
    <property type="reaction ID" value="UER00162"/>
</dbReference>
<dbReference type="Proteomes" id="UP000000788">
    <property type="component" value="Chromosome"/>
</dbReference>
<dbReference type="GO" id="GO:0051537">
    <property type="term" value="F:2 iron, 2 sulfur cluster binding"/>
    <property type="evidence" value="ECO:0007669"/>
    <property type="project" value="UniProtKB-KW"/>
</dbReference>
<dbReference type="GO" id="GO:0051539">
    <property type="term" value="F:4 iron, 4 sulfur cluster binding"/>
    <property type="evidence" value="ECO:0007669"/>
    <property type="project" value="UniProtKB-KW"/>
</dbReference>
<dbReference type="GO" id="GO:0004076">
    <property type="term" value="F:biotin synthase activity"/>
    <property type="evidence" value="ECO:0007669"/>
    <property type="project" value="UniProtKB-UniRule"/>
</dbReference>
<dbReference type="GO" id="GO:0005506">
    <property type="term" value="F:iron ion binding"/>
    <property type="evidence" value="ECO:0007669"/>
    <property type="project" value="UniProtKB-UniRule"/>
</dbReference>
<dbReference type="GO" id="GO:0009102">
    <property type="term" value="P:biotin biosynthetic process"/>
    <property type="evidence" value="ECO:0007669"/>
    <property type="project" value="UniProtKB-UniRule"/>
</dbReference>
<dbReference type="CDD" id="cd01335">
    <property type="entry name" value="Radical_SAM"/>
    <property type="match status" value="1"/>
</dbReference>
<dbReference type="Gene3D" id="3.20.20.70">
    <property type="entry name" value="Aldolase class I"/>
    <property type="match status" value="1"/>
</dbReference>
<dbReference type="HAMAP" id="MF_01694">
    <property type="entry name" value="BioB"/>
    <property type="match status" value="1"/>
</dbReference>
<dbReference type="InterPro" id="IPR013785">
    <property type="entry name" value="Aldolase_TIM"/>
</dbReference>
<dbReference type="InterPro" id="IPR010722">
    <property type="entry name" value="BATS_dom"/>
</dbReference>
<dbReference type="InterPro" id="IPR002684">
    <property type="entry name" value="Biotin_synth/BioAB"/>
</dbReference>
<dbReference type="InterPro" id="IPR024177">
    <property type="entry name" value="Biotin_synthase"/>
</dbReference>
<dbReference type="InterPro" id="IPR006638">
    <property type="entry name" value="Elp3/MiaA/NifB-like_rSAM"/>
</dbReference>
<dbReference type="InterPro" id="IPR007197">
    <property type="entry name" value="rSAM"/>
</dbReference>
<dbReference type="NCBIfam" id="TIGR00433">
    <property type="entry name" value="bioB"/>
    <property type="match status" value="1"/>
</dbReference>
<dbReference type="PANTHER" id="PTHR22976">
    <property type="entry name" value="BIOTIN SYNTHASE"/>
    <property type="match status" value="1"/>
</dbReference>
<dbReference type="PANTHER" id="PTHR22976:SF2">
    <property type="entry name" value="BIOTIN SYNTHASE, MITOCHONDRIAL"/>
    <property type="match status" value="1"/>
</dbReference>
<dbReference type="Pfam" id="PF06968">
    <property type="entry name" value="BATS"/>
    <property type="match status" value="1"/>
</dbReference>
<dbReference type="Pfam" id="PF04055">
    <property type="entry name" value="Radical_SAM"/>
    <property type="match status" value="1"/>
</dbReference>
<dbReference type="PIRSF" id="PIRSF001619">
    <property type="entry name" value="Biotin_synth"/>
    <property type="match status" value="1"/>
</dbReference>
<dbReference type="SFLD" id="SFLDF00272">
    <property type="entry name" value="biotin_synthase"/>
    <property type="match status" value="1"/>
</dbReference>
<dbReference type="SFLD" id="SFLDG01278">
    <property type="entry name" value="biotin_synthase_like"/>
    <property type="match status" value="1"/>
</dbReference>
<dbReference type="SMART" id="SM00876">
    <property type="entry name" value="BATS"/>
    <property type="match status" value="1"/>
</dbReference>
<dbReference type="SMART" id="SM00729">
    <property type="entry name" value="Elp3"/>
    <property type="match status" value="1"/>
</dbReference>
<dbReference type="SUPFAM" id="SSF102114">
    <property type="entry name" value="Radical SAM enzymes"/>
    <property type="match status" value="1"/>
</dbReference>
<dbReference type="PROSITE" id="PS51918">
    <property type="entry name" value="RADICAL_SAM"/>
    <property type="match status" value="1"/>
</dbReference>
<keyword id="KW-0001">2Fe-2S</keyword>
<keyword id="KW-0004">4Fe-4S</keyword>
<keyword id="KW-0093">Biotin biosynthesis</keyword>
<keyword id="KW-0408">Iron</keyword>
<keyword id="KW-0411">Iron-sulfur</keyword>
<keyword id="KW-0479">Metal-binding</keyword>
<keyword id="KW-1185">Reference proteome</keyword>
<keyword id="KW-0949">S-adenosyl-L-methionine</keyword>
<keyword id="KW-0808">Transferase</keyword>
<proteinExistence type="inferred from homology"/>
<organism>
    <name type="scientific">Prochlorococcus marinus (strain MIT 9211)</name>
    <dbReference type="NCBI Taxonomy" id="93059"/>
    <lineage>
        <taxon>Bacteria</taxon>
        <taxon>Bacillati</taxon>
        <taxon>Cyanobacteriota</taxon>
        <taxon>Cyanophyceae</taxon>
        <taxon>Synechococcales</taxon>
        <taxon>Prochlorococcaceae</taxon>
        <taxon>Prochlorococcus</taxon>
    </lineage>
</organism>
<name>BIOB_PROM4</name>
<protein>
    <recommendedName>
        <fullName evidence="1">Biotin synthase</fullName>
        <ecNumber evidence="1">2.8.1.6</ecNumber>
    </recommendedName>
</protein>
<sequence length="332" mass="36790">MTLINYKAADQKEVQLRYDWSFSEVESLLQKPLMDLLWDAQRVHRLTNPGYKVQLASLLSVKTGGCEEDCAYCSQSIHNSSDITSYSDFEVEEVLKRAKTAKDAGADRFCMGWAWREIRDGQPFESMLKMVRGVRDLGMEACVTAGMLTDNQALRLAEAGLTAYNHNLDTSPENYDQIITTRTYQERIETLERVRSAGITLCTGGIIGLGESLKDRASLLKVLANMSPHPESVPINALVAVEGTPLQDLPSIDPIEMVRMVATARILMPLSRVRLSAGREQLGDEAQILCFLAGADSIFYGDTLLTTSNPAIQADRELLSKAGVQVNWSLHE</sequence>
<feature type="chain" id="PRO_0000381540" description="Biotin synthase">
    <location>
        <begin position="1"/>
        <end position="332"/>
    </location>
</feature>
<feature type="domain" description="Radical SAM core" evidence="2">
    <location>
        <begin position="51"/>
        <end position="279"/>
    </location>
</feature>
<feature type="binding site" evidence="1">
    <location>
        <position position="66"/>
    </location>
    <ligand>
        <name>[4Fe-4S] cluster</name>
        <dbReference type="ChEBI" id="CHEBI:49883"/>
        <note>4Fe-4S-S-AdoMet</note>
    </ligand>
</feature>
<feature type="binding site" evidence="1">
    <location>
        <position position="70"/>
    </location>
    <ligand>
        <name>[4Fe-4S] cluster</name>
        <dbReference type="ChEBI" id="CHEBI:49883"/>
        <note>4Fe-4S-S-AdoMet</note>
    </ligand>
</feature>
<feature type="binding site" evidence="1">
    <location>
        <position position="73"/>
    </location>
    <ligand>
        <name>[4Fe-4S] cluster</name>
        <dbReference type="ChEBI" id="CHEBI:49883"/>
        <note>4Fe-4S-S-AdoMet</note>
    </ligand>
</feature>
<feature type="binding site" evidence="1">
    <location>
        <position position="110"/>
    </location>
    <ligand>
        <name>[2Fe-2S] cluster</name>
        <dbReference type="ChEBI" id="CHEBI:190135"/>
    </ligand>
</feature>
<feature type="binding site" evidence="1">
    <location>
        <position position="142"/>
    </location>
    <ligand>
        <name>[2Fe-2S] cluster</name>
        <dbReference type="ChEBI" id="CHEBI:190135"/>
    </ligand>
</feature>
<feature type="binding site" evidence="1">
    <location>
        <position position="202"/>
    </location>
    <ligand>
        <name>[2Fe-2S] cluster</name>
        <dbReference type="ChEBI" id="CHEBI:190135"/>
    </ligand>
</feature>
<feature type="binding site" evidence="1">
    <location>
        <position position="274"/>
    </location>
    <ligand>
        <name>[2Fe-2S] cluster</name>
        <dbReference type="ChEBI" id="CHEBI:190135"/>
    </ligand>
</feature>
<reference key="1">
    <citation type="journal article" date="2007" name="PLoS Genet.">
        <title>Patterns and implications of gene gain and loss in the evolution of Prochlorococcus.</title>
        <authorList>
            <person name="Kettler G.C."/>
            <person name="Martiny A.C."/>
            <person name="Huang K."/>
            <person name="Zucker J."/>
            <person name="Coleman M.L."/>
            <person name="Rodrigue S."/>
            <person name="Chen F."/>
            <person name="Lapidus A."/>
            <person name="Ferriera S."/>
            <person name="Johnson J."/>
            <person name="Steglich C."/>
            <person name="Church G.M."/>
            <person name="Richardson P."/>
            <person name="Chisholm S.W."/>
        </authorList>
    </citation>
    <scope>NUCLEOTIDE SEQUENCE [LARGE SCALE GENOMIC DNA]</scope>
    <source>
        <strain>MIT 9211</strain>
    </source>
</reference>